<proteinExistence type="evidence at transcript level"/>
<comment type="function">
    <text evidence="1 2">Protein-lysine N-trimethyltransferase that specifically catalyzes trimethylation of 'Lys-22' of the RPL40/eL40 subunit of the 60S ribosome, thereby promoting translation elongation and protein synthesis (By similarity). May also act as a histone methyltransferase in the context of histone octamers, but not on nucleosome substrates: trimethylates 'Lys-36' of histone H3 and 'Lys-20' of histone H4 to form H3K36me3 and H4K20me3, respectively (By similarity). The histone methyltransferase activity, which is independent of its SET domain, is however unsure in vivo (By similarity).</text>
</comment>
<comment type="catalytic activity">
    <reaction evidence="2">
        <text>L-lysyl-[protein] + 3 S-adenosyl-L-methionine = N(6),N(6),N(6)-trimethyl-L-lysyl-[protein] + 3 S-adenosyl-L-homocysteine + 3 H(+)</text>
        <dbReference type="Rhea" id="RHEA:54192"/>
        <dbReference type="Rhea" id="RHEA-COMP:9752"/>
        <dbReference type="Rhea" id="RHEA-COMP:13826"/>
        <dbReference type="ChEBI" id="CHEBI:15378"/>
        <dbReference type="ChEBI" id="CHEBI:29969"/>
        <dbReference type="ChEBI" id="CHEBI:57856"/>
        <dbReference type="ChEBI" id="CHEBI:59789"/>
        <dbReference type="ChEBI" id="CHEBI:61961"/>
    </reaction>
    <physiologicalReaction direction="left-to-right" evidence="2">
        <dbReference type="Rhea" id="RHEA:54193"/>
    </physiologicalReaction>
</comment>
<comment type="catalytic activity">
    <reaction evidence="1">
        <text>L-lysyl(20)-[histone H4] + 3 S-adenosyl-L-methionine = N(6),N(6),N(6)-trimethyl-L-lysyl(20)-[histone H4] + 3 S-adenosyl-L-homocysteine + 3 H(+)</text>
        <dbReference type="Rhea" id="RHEA:64456"/>
        <dbReference type="Rhea" id="RHEA-COMP:15554"/>
        <dbReference type="Rhea" id="RHEA-COMP:15998"/>
        <dbReference type="ChEBI" id="CHEBI:15378"/>
        <dbReference type="ChEBI" id="CHEBI:29969"/>
        <dbReference type="ChEBI" id="CHEBI:57856"/>
        <dbReference type="ChEBI" id="CHEBI:59789"/>
        <dbReference type="ChEBI" id="CHEBI:61961"/>
        <dbReference type="EC" id="2.1.1.372"/>
    </reaction>
</comment>
<comment type="catalytic activity">
    <reaction evidence="1">
        <text>L-lysyl(36)-[histone H3] + 3 S-adenosyl-L-methionine = N(6),N(6),N(6)-trimethyl-L-lysyl(36)-[histone H3] + 3 S-adenosyl-L-homocysteine + 3 H(+)</text>
        <dbReference type="Rhea" id="RHEA:60324"/>
        <dbReference type="Rhea" id="RHEA-COMP:9785"/>
        <dbReference type="Rhea" id="RHEA-COMP:15536"/>
        <dbReference type="ChEBI" id="CHEBI:15378"/>
        <dbReference type="ChEBI" id="CHEBI:29969"/>
        <dbReference type="ChEBI" id="CHEBI:57856"/>
        <dbReference type="ChEBI" id="CHEBI:59789"/>
        <dbReference type="ChEBI" id="CHEBI:61961"/>
        <dbReference type="EC" id="2.1.1.359"/>
    </reaction>
</comment>
<comment type="subcellular location">
    <subcellularLocation>
        <location evidence="2">Cytoplasm</location>
    </subcellularLocation>
</comment>
<comment type="similarity">
    <text evidence="3">Belongs to the class V-like SAM-binding methyltransferase superfamily.</text>
</comment>
<keyword id="KW-0963">Cytoplasm</keyword>
<keyword id="KW-0479">Metal-binding</keyword>
<keyword id="KW-0489">Methyltransferase</keyword>
<keyword id="KW-1185">Reference proteome</keyword>
<keyword id="KW-0949">S-adenosyl-L-methionine</keyword>
<keyword id="KW-0808">Transferase</keyword>
<keyword id="KW-0862">Zinc</keyword>
<keyword id="KW-0863">Zinc-finger</keyword>
<gene>
    <name type="primary">SMYD5</name>
    <name evidence="5" type="ORF">RCJMB04_22j23</name>
</gene>
<reference key="1">
    <citation type="journal article" date="2005" name="Genome Biol.">
        <title>Full-length cDNAs from chicken bursal lymphocytes to facilitate gene function analysis.</title>
        <authorList>
            <person name="Caldwell R.B."/>
            <person name="Kierzek A.M."/>
            <person name="Arakawa H."/>
            <person name="Bezzubov Y."/>
            <person name="Zaim J."/>
            <person name="Fiedler P."/>
            <person name="Kutter S."/>
            <person name="Blagodatski A."/>
            <person name="Kostovska D."/>
            <person name="Koter M."/>
            <person name="Plachy J."/>
            <person name="Carninci P."/>
            <person name="Hayashizaki Y."/>
            <person name="Buerstedde J.-M."/>
        </authorList>
    </citation>
    <scope>NUCLEOTIDE SEQUENCE [LARGE SCALE MRNA]</scope>
    <source>
        <strain>CB</strain>
        <tissue>Bursa of Fabricius</tissue>
    </source>
</reference>
<feature type="chain" id="PRO_0000227790" description="Protein-lysine N-trimethyltransferase SMYD5">
    <location>
        <begin position="1"/>
        <end position="420"/>
    </location>
</feature>
<feature type="domain" description="SET" evidence="3">
    <location>
        <begin position="29"/>
        <end position="358"/>
    </location>
</feature>
<feature type="zinc finger region" description="MYND-type">
    <location>
        <begin position="104"/>
        <end position="142"/>
    </location>
</feature>
<feature type="region of interest" description="Disordered" evidence="4">
    <location>
        <begin position="392"/>
        <end position="420"/>
    </location>
</feature>
<feature type="binding site" evidence="3">
    <location>
        <position position="357"/>
    </location>
    <ligand>
        <name>S-adenosyl-L-methionine</name>
        <dbReference type="ChEBI" id="CHEBI:59789"/>
    </ligand>
</feature>
<sequence length="420" mass="46968">MAAAAGDVRGAALGARPGLGAAAAAAAAAEARFISSAKGKGLFATRSIRKGEAVFVEKPVVSSQFLWNALYNYRACDHCLRALETAEENAQRLLGRSSLVLPHPEQCSIRKDLHQQCPRCQVTYCSAECRQAALEQYHQVLCLGPSRDDPTHPLNKLQEAWRNMHYPPETSSIMLMARMVATVKQAKDKDWWIKAFSQFCSKTANEEEEIAHKLLGDKFKGQLELLRLLFTEALYDEQLSRWFTPEGFRSLFALVGTNGQGIGTSSLSQWVHACDALDLPMLQREELDAFIDQLYKDIEKESGEFLNCEGSGLYMLQSCCNHSCIPNAETSFPDNNFLLYLTALEDIEAGEEICISYLDCCQRERSRHSRNKILRENYLFTCSCPKCLAQADDPDVTSDEEEEAEGETDDAELEDEMTDV</sequence>
<evidence type="ECO:0000250" key="1">
    <source>
        <dbReference type="UniProtKB" id="Q3TYX3"/>
    </source>
</evidence>
<evidence type="ECO:0000250" key="2">
    <source>
        <dbReference type="UniProtKB" id="Q6GMV2"/>
    </source>
</evidence>
<evidence type="ECO:0000255" key="3">
    <source>
        <dbReference type="PROSITE-ProRule" id="PRU00190"/>
    </source>
</evidence>
<evidence type="ECO:0000256" key="4">
    <source>
        <dbReference type="SAM" id="MobiDB-lite"/>
    </source>
</evidence>
<evidence type="ECO:0000303" key="5">
    <source>
    </source>
</evidence>
<evidence type="ECO:0000305" key="6"/>
<protein>
    <recommendedName>
        <fullName evidence="6">Protein-lysine N-trimethyltransferase SMYD5</fullName>
        <ecNumber evidence="2">2.1.1.-</ecNumber>
    </recommendedName>
    <alternativeName>
        <fullName>SET and MYND domain-containing protein 5</fullName>
    </alternativeName>
    <alternativeName>
        <fullName>[histone H3]-lysine20 N-trimethyltransferase SMYD5</fullName>
        <ecNumber evidence="1">2.1.1.372</ecNumber>
    </alternativeName>
    <alternativeName>
        <fullName>[histone H4]-lysine36 N-trimethyltransferase SMYD5</fullName>
        <ecNumber evidence="1">2.1.1.359</ecNumber>
    </alternativeName>
</protein>
<accession>Q5ZIZ2</accession>
<name>SMYD5_CHICK</name>
<organism>
    <name type="scientific">Gallus gallus</name>
    <name type="common">Chicken</name>
    <dbReference type="NCBI Taxonomy" id="9031"/>
    <lineage>
        <taxon>Eukaryota</taxon>
        <taxon>Metazoa</taxon>
        <taxon>Chordata</taxon>
        <taxon>Craniata</taxon>
        <taxon>Vertebrata</taxon>
        <taxon>Euteleostomi</taxon>
        <taxon>Archelosauria</taxon>
        <taxon>Archosauria</taxon>
        <taxon>Dinosauria</taxon>
        <taxon>Saurischia</taxon>
        <taxon>Theropoda</taxon>
        <taxon>Coelurosauria</taxon>
        <taxon>Aves</taxon>
        <taxon>Neognathae</taxon>
        <taxon>Galloanserae</taxon>
        <taxon>Galliformes</taxon>
        <taxon>Phasianidae</taxon>
        <taxon>Phasianinae</taxon>
        <taxon>Gallus</taxon>
    </lineage>
</organism>
<dbReference type="EC" id="2.1.1.-" evidence="2"/>
<dbReference type="EC" id="2.1.1.372" evidence="1"/>
<dbReference type="EC" id="2.1.1.359" evidence="1"/>
<dbReference type="EMBL" id="AJ720642">
    <property type="protein sequence ID" value="CAG32301.1"/>
    <property type="molecule type" value="mRNA"/>
</dbReference>
<dbReference type="RefSeq" id="NP_001012912.1">
    <property type="nucleotide sequence ID" value="NM_001012894.1"/>
</dbReference>
<dbReference type="FunCoup" id="Q5ZIZ2">
    <property type="interactions" value="1199"/>
</dbReference>
<dbReference type="STRING" id="9031.ENSGALP00000057344"/>
<dbReference type="PaxDb" id="9031-ENSGALP00000025878"/>
<dbReference type="GeneID" id="422951"/>
<dbReference type="KEGG" id="gga:422951"/>
<dbReference type="CTD" id="10322"/>
<dbReference type="VEuPathDB" id="HostDB:geneid_422951"/>
<dbReference type="eggNOG" id="KOG2084">
    <property type="taxonomic scope" value="Eukaryota"/>
</dbReference>
<dbReference type="HOGENOM" id="CLU_054216_0_0_1"/>
<dbReference type="InParanoid" id="Q5ZIZ2"/>
<dbReference type="OMA" id="LMAMYQQ"/>
<dbReference type="OrthoDB" id="438641at2759"/>
<dbReference type="PhylomeDB" id="Q5ZIZ2"/>
<dbReference type="PRO" id="PR:Q5ZIZ2"/>
<dbReference type="Proteomes" id="UP000000539">
    <property type="component" value="Chromosome 4"/>
</dbReference>
<dbReference type="Bgee" id="ENSGALG00000022920">
    <property type="expression patterns" value="Expressed in brain and 13 other cell types or tissues"/>
</dbReference>
<dbReference type="GO" id="GO:0005737">
    <property type="term" value="C:cytoplasm"/>
    <property type="evidence" value="ECO:0000250"/>
    <property type="project" value="UniProtKB"/>
</dbReference>
<dbReference type="GO" id="GO:0140955">
    <property type="term" value="F:histone H3K36 trimethyltransferase activity"/>
    <property type="evidence" value="ECO:0000250"/>
    <property type="project" value="UniProtKB"/>
</dbReference>
<dbReference type="GO" id="GO:0042799">
    <property type="term" value="F:histone H4K20 methyltransferase activity"/>
    <property type="evidence" value="ECO:0000250"/>
    <property type="project" value="UniProtKB"/>
</dbReference>
<dbReference type="GO" id="GO:0140943">
    <property type="term" value="F:histone H4K20 trimethyltransferase activity"/>
    <property type="evidence" value="ECO:0007669"/>
    <property type="project" value="RHEA"/>
</dbReference>
<dbReference type="GO" id="GO:0016279">
    <property type="term" value="F:protein-lysine N-methyltransferase activity"/>
    <property type="evidence" value="ECO:0000250"/>
    <property type="project" value="UniProtKB"/>
</dbReference>
<dbReference type="GO" id="GO:0008270">
    <property type="term" value="F:zinc ion binding"/>
    <property type="evidence" value="ECO:0007669"/>
    <property type="project" value="UniProtKB-KW"/>
</dbReference>
<dbReference type="GO" id="GO:0032259">
    <property type="term" value="P:methylation"/>
    <property type="evidence" value="ECO:0007669"/>
    <property type="project" value="UniProtKB-KW"/>
</dbReference>
<dbReference type="GO" id="GO:0045814">
    <property type="term" value="P:negative regulation of gene expression, epigenetic"/>
    <property type="evidence" value="ECO:0000250"/>
    <property type="project" value="UniProtKB"/>
</dbReference>
<dbReference type="GO" id="GO:1900249">
    <property type="term" value="P:positive regulation of cytoplasmic translational elongation"/>
    <property type="evidence" value="ECO:0000250"/>
    <property type="project" value="UniProtKB"/>
</dbReference>
<dbReference type="GO" id="GO:2000736">
    <property type="term" value="P:regulation of stem cell differentiation"/>
    <property type="evidence" value="ECO:0000250"/>
    <property type="project" value="UniProtKB"/>
</dbReference>
<dbReference type="GO" id="GO:2000035">
    <property type="term" value="P:regulation of stem cell division"/>
    <property type="evidence" value="ECO:0000250"/>
    <property type="project" value="UniProtKB"/>
</dbReference>
<dbReference type="CDD" id="cd10521">
    <property type="entry name" value="SET_SMYD5"/>
    <property type="match status" value="1"/>
</dbReference>
<dbReference type="FunFam" id="2.170.270.10:FF:000078">
    <property type="entry name" value="SMYD family member 5"/>
    <property type="match status" value="1"/>
</dbReference>
<dbReference type="Gene3D" id="1.10.220.160">
    <property type="match status" value="1"/>
</dbReference>
<dbReference type="Gene3D" id="6.10.140.2220">
    <property type="match status" value="1"/>
</dbReference>
<dbReference type="Gene3D" id="2.170.270.10">
    <property type="entry name" value="SET domain"/>
    <property type="match status" value="2"/>
</dbReference>
<dbReference type="InterPro" id="IPR001214">
    <property type="entry name" value="SET_dom"/>
</dbReference>
<dbReference type="InterPro" id="IPR046341">
    <property type="entry name" value="SET_dom_sf"/>
</dbReference>
<dbReference type="InterPro" id="IPR044422">
    <property type="entry name" value="SMYD5_SET"/>
</dbReference>
<dbReference type="PANTHER" id="PTHR46402:SF2">
    <property type="entry name" value="HISTONE-LYSINE N-TRIMETHYLTRANSFERASE SMYD5"/>
    <property type="match status" value="1"/>
</dbReference>
<dbReference type="PANTHER" id="PTHR46402">
    <property type="entry name" value="SET AND MYND DOMAIN-CONTAINING PROTEIN 5"/>
    <property type="match status" value="1"/>
</dbReference>
<dbReference type="Pfam" id="PF00856">
    <property type="entry name" value="SET"/>
    <property type="match status" value="1"/>
</dbReference>
<dbReference type="SMART" id="SM00317">
    <property type="entry name" value="SET"/>
    <property type="match status" value="1"/>
</dbReference>
<dbReference type="SUPFAM" id="SSF82199">
    <property type="entry name" value="SET domain"/>
    <property type="match status" value="1"/>
</dbReference>
<dbReference type="PROSITE" id="PS50280">
    <property type="entry name" value="SET"/>
    <property type="match status" value="1"/>
</dbReference>